<organism>
    <name type="scientific">Limosilactobacillus reuteri subsp. reuteri (strain JCM 1112)</name>
    <name type="common">Lactobacillus reuteri</name>
    <dbReference type="NCBI Taxonomy" id="557433"/>
    <lineage>
        <taxon>Bacteria</taxon>
        <taxon>Bacillati</taxon>
        <taxon>Bacillota</taxon>
        <taxon>Bacilli</taxon>
        <taxon>Lactobacillales</taxon>
        <taxon>Lactobacillaceae</taxon>
        <taxon>Limosilactobacillus</taxon>
    </lineage>
</organism>
<name>RNZ_LIMRJ</name>
<reference key="1">
    <citation type="journal article" date="2008" name="DNA Res.">
        <title>Comparative genome analysis of Lactobacillus reuteri and Lactobacillus fermentum reveal a genomic island for reuterin and cobalamin production.</title>
        <authorList>
            <person name="Morita H."/>
            <person name="Toh H."/>
            <person name="Fukuda S."/>
            <person name="Horikawa H."/>
            <person name="Oshima K."/>
            <person name="Suzuki T."/>
            <person name="Murakami M."/>
            <person name="Hisamatsu S."/>
            <person name="Kato Y."/>
            <person name="Takizawa T."/>
            <person name="Fukuoka H."/>
            <person name="Yoshimura T."/>
            <person name="Itoh K."/>
            <person name="O'Sullivan D.J."/>
            <person name="McKay L.L."/>
            <person name="Ohno H."/>
            <person name="Kikuchi J."/>
            <person name="Masaoka T."/>
            <person name="Hattori M."/>
        </authorList>
    </citation>
    <scope>NUCLEOTIDE SEQUENCE [LARGE SCALE GENOMIC DNA]</scope>
    <source>
        <strain>JCM 1112</strain>
    </source>
</reference>
<accession>B2G6S0</accession>
<evidence type="ECO:0000255" key="1">
    <source>
        <dbReference type="HAMAP-Rule" id="MF_01818"/>
    </source>
</evidence>
<dbReference type="EC" id="3.1.26.11" evidence="1"/>
<dbReference type="EMBL" id="AP007281">
    <property type="protein sequence ID" value="BAG25152.1"/>
    <property type="molecule type" value="Genomic_DNA"/>
</dbReference>
<dbReference type="RefSeq" id="WP_003668232.1">
    <property type="nucleotide sequence ID" value="NC_010609.1"/>
</dbReference>
<dbReference type="SMR" id="B2G6S0"/>
<dbReference type="KEGG" id="lrf:LAR_0636"/>
<dbReference type="HOGENOM" id="CLU_031317_2_0_9"/>
<dbReference type="GO" id="GO:0042781">
    <property type="term" value="F:3'-tRNA processing endoribonuclease activity"/>
    <property type="evidence" value="ECO:0007669"/>
    <property type="project" value="UniProtKB-UniRule"/>
</dbReference>
<dbReference type="GO" id="GO:0008270">
    <property type="term" value="F:zinc ion binding"/>
    <property type="evidence" value="ECO:0007669"/>
    <property type="project" value="UniProtKB-UniRule"/>
</dbReference>
<dbReference type="CDD" id="cd07717">
    <property type="entry name" value="RNaseZ_ZiPD-like_MBL-fold"/>
    <property type="match status" value="1"/>
</dbReference>
<dbReference type="FunFam" id="3.60.15.10:FF:000002">
    <property type="entry name" value="Ribonuclease Z"/>
    <property type="match status" value="1"/>
</dbReference>
<dbReference type="Gene3D" id="3.60.15.10">
    <property type="entry name" value="Ribonuclease Z/Hydroxyacylglutathione hydrolase-like"/>
    <property type="match status" value="1"/>
</dbReference>
<dbReference type="HAMAP" id="MF_01818">
    <property type="entry name" value="RNase_Z_BN"/>
    <property type="match status" value="1"/>
</dbReference>
<dbReference type="InterPro" id="IPR001279">
    <property type="entry name" value="Metallo-B-lactamas"/>
</dbReference>
<dbReference type="InterPro" id="IPR036866">
    <property type="entry name" value="RibonucZ/Hydroxyglut_hydro"/>
</dbReference>
<dbReference type="InterPro" id="IPR013471">
    <property type="entry name" value="RNase_Z/BN"/>
</dbReference>
<dbReference type="NCBIfam" id="NF000801">
    <property type="entry name" value="PRK00055.1-3"/>
    <property type="match status" value="1"/>
</dbReference>
<dbReference type="NCBIfam" id="TIGR02651">
    <property type="entry name" value="RNase_Z"/>
    <property type="match status" value="1"/>
</dbReference>
<dbReference type="PANTHER" id="PTHR46018">
    <property type="entry name" value="ZINC PHOSPHODIESTERASE ELAC PROTEIN 1"/>
    <property type="match status" value="1"/>
</dbReference>
<dbReference type="PANTHER" id="PTHR46018:SF2">
    <property type="entry name" value="ZINC PHOSPHODIESTERASE ELAC PROTEIN 1"/>
    <property type="match status" value="1"/>
</dbReference>
<dbReference type="Pfam" id="PF12706">
    <property type="entry name" value="Lactamase_B_2"/>
    <property type="match status" value="2"/>
</dbReference>
<dbReference type="SMART" id="SM00849">
    <property type="entry name" value="Lactamase_B"/>
    <property type="match status" value="1"/>
</dbReference>
<dbReference type="SUPFAM" id="SSF56281">
    <property type="entry name" value="Metallo-hydrolase/oxidoreductase"/>
    <property type="match status" value="1"/>
</dbReference>
<keyword id="KW-0255">Endonuclease</keyword>
<keyword id="KW-0378">Hydrolase</keyword>
<keyword id="KW-0479">Metal-binding</keyword>
<keyword id="KW-0540">Nuclease</keyword>
<keyword id="KW-0819">tRNA processing</keyword>
<keyword id="KW-0862">Zinc</keyword>
<proteinExistence type="inferred from homology"/>
<sequence length="309" mass="34498">MQLEFLGTGAGSPSKQRNVASVALRLLEERNAIWLFDVGEATQHQILNTTIRPRKIEKIFITHLHGDHIFGLPGLLSSRSFQGGTEPLTIYGPVGIKRYVQTSLQVSESRLSYPLHFVEITDDGELFNDHGFRVIARKLDHKIACFGYRIEEADHPGELQVEKLREQKVPSGPIYGQLKAGKTVTLPDGRVLDGHDFIGTPQPGRIIAILGDTRQTKNAILLAQNADVLVHESTFAKDETKMAHNYYHSTSKQAAEIAKKAGVKKLLLNHISARYTGKAAYQLAYQVRNIIPDTRVVNDFDVIDIPFKK</sequence>
<comment type="function">
    <text evidence="1">Zinc phosphodiesterase, which displays some tRNA 3'-processing endonuclease activity. Probably involved in tRNA maturation, by removing a 3'-trailer from precursor tRNA.</text>
</comment>
<comment type="catalytic activity">
    <reaction evidence="1">
        <text>Endonucleolytic cleavage of RNA, removing extra 3' nucleotides from tRNA precursor, generating 3' termini of tRNAs. A 3'-hydroxy group is left at the tRNA terminus and a 5'-phosphoryl group is left at the trailer molecule.</text>
        <dbReference type="EC" id="3.1.26.11"/>
    </reaction>
</comment>
<comment type="cofactor">
    <cofactor evidence="1">
        <name>Zn(2+)</name>
        <dbReference type="ChEBI" id="CHEBI:29105"/>
    </cofactor>
    <text evidence="1">Binds 2 Zn(2+) ions.</text>
</comment>
<comment type="subunit">
    <text evidence="1">Homodimer.</text>
</comment>
<comment type="similarity">
    <text evidence="1">Belongs to the RNase Z family.</text>
</comment>
<feature type="chain" id="PRO_1000187967" description="Ribonuclease Z">
    <location>
        <begin position="1"/>
        <end position="309"/>
    </location>
</feature>
<feature type="active site" description="Proton acceptor" evidence="1">
    <location>
        <position position="67"/>
    </location>
</feature>
<feature type="binding site" evidence="1">
    <location>
        <position position="63"/>
    </location>
    <ligand>
        <name>Zn(2+)</name>
        <dbReference type="ChEBI" id="CHEBI:29105"/>
        <label>1</label>
        <note>catalytic</note>
    </ligand>
</feature>
<feature type="binding site" evidence="1">
    <location>
        <position position="65"/>
    </location>
    <ligand>
        <name>Zn(2+)</name>
        <dbReference type="ChEBI" id="CHEBI:29105"/>
        <label>1</label>
        <note>catalytic</note>
    </ligand>
</feature>
<feature type="binding site" evidence="1">
    <location>
        <position position="67"/>
    </location>
    <ligand>
        <name>Zn(2+)</name>
        <dbReference type="ChEBI" id="CHEBI:29105"/>
        <label>2</label>
        <note>catalytic</note>
    </ligand>
</feature>
<feature type="binding site" evidence="1">
    <location>
        <position position="68"/>
    </location>
    <ligand>
        <name>Zn(2+)</name>
        <dbReference type="ChEBI" id="CHEBI:29105"/>
        <label>2</label>
        <note>catalytic</note>
    </ligand>
</feature>
<feature type="binding site" evidence="1">
    <location>
        <position position="141"/>
    </location>
    <ligand>
        <name>Zn(2+)</name>
        <dbReference type="ChEBI" id="CHEBI:29105"/>
        <label>1</label>
        <note>catalytic</note>
    </ligand>
</feature>
<feature type="binding site" evidence="1">
    <location>
        <position position="212"/>
    </location>
    <ligand>
        <name>Zn(2+)</name>
        <dbReference type="ChEBI" id="CHEBI:29105"/>
        <label>1</label>
        <note>catalytic</note>
    </ligand>
</feature>
<feature type="binding site" evidence="1">
    <location>
        <position position="212"/>
    </location>
    <ligand>
        <name>Zn(2+)</name>
        <dbReference type="ChEBI" id="CHEBI:29105"/>
        <label>2</label>
        <note>catalytic</note>
    </ligand>
</feature>
<feature type="binding site" evidence="1">
    <location>
        <position position="270"/>
    </location>
    <ligand>
        <name>Zn(2+)</name>
        <dbReference type="ChEBI" id="CHEBI:29105"/>
        <label>2</label>
        <note>catalytic</note>
    </ligand>
</feature>
<protein>
    <recommendedName>
        <fullName evidence="1">Ribonuclease Z</fullName>
        <shortName evidence="1">RNase Z</shortName>
        <ecNumber evidence="1">3.1.26.11</ecNumber>
    </recommendedName>
    <alternativeName>
        <fullName evidence="1">tRNA 3 endonuclease</fullName>
    </alternativeName>
    <alternativeName>
        <fullName evidence="1">tRNase Z</fullName>
    </alternativeName>
</protein>
<gene>
    <name evidence="1" type="primary">rnz</name>
    <name type="ordered locus">LAR_0636</name>
</gene>